<name>COPE2_ARATH</name>
<accession>O64748</accession>
<feature type="chain" id="PRO_0000193854" description="Coatomer subunit epsilon-2">
    <location>
        <begin position="1"/>
        <end position="293"/>
    </location>
</feature>
<keyword id="KW-0025">Alternative splicing</keyword>
<keyword id="KW-0963">Cytoplasm</keyword>
<keyword id="KW-0968">Cytoplasmic vesicle</keyword>
<keyword id="KW-0931">ER-Golgi transport</keyword>
<keyword id="KW-0333">Golgi apparatus</keyword>
<keyword id="KW-0472">Membrane</keyword>
<keyword id="KW-0653">Protein transport</keyword>
<keyword id="KW-1185">Reference proteome</keyword>
<keyword id="KW-0813">Transport</keyword>
<gene>
    <name type="ordered locus">At2g34840</name>
    <name type="ORF">F19I3.7</name>
</gene>
<protein>
    <recommendedName>
        <fullName>Coatomer subunit epsilon-2</fullName>
    </recommendedName>
    <alternativeName>
        <fullName>Epsilon-coat protein 2</fullName>
        <shortName>Epsilon-COP 2</shortName>
    </alternativeName>
</protein>
<dbReference type="EMBL" id="AC004238">
    <property type="protein sequence ID" value="AAC12824.1"/>
    <property type="molecule type" value="Genomic_DNA"/>
</dbReference>
<dbReference type="EMBL" id="CP002685">
    <property type="protein sequence ID" value="AEC09028.1"/>
    <property type="molecule type" value="Genomic_DNA"/>
</dbReference>
<dbReference type="EMBL" id="AY075627">
    <property type="protein sequence ID" value="AAL91638.1"/>
    <property type="molecule type" value="mRNA"/>
</dbReference>
<dbReference type="EMBL" id="AY142051">
    <property type="protein sequence ID" value="AAM98315.1"/>
    <property type="molecule type" value="mRNA"/>
</dbReference>
<dbReference type="PIR" id="T00466">
    <property type="entry name" value="T00466"/>
</dbReference>
<dbReference type="RefSeq" id="NP_181030.1">
    <molecule id="O64748-1"/>
    <property type="nucleotide sequence ID" value="NM_129037.6"/>
</dbReference>
<dbReference type="SMR" id="O64748"/>
<dbReference type="BioGRID" id="3395">
    <property type="interactions" value="18"/>
</dbReference>
<dbReference type="FunCoup" id="O64748">
    <property type="interactions" value="3852"/>
</dbReference>
<dbReference type="STRING" id="3702.O64748"/>
<dbReference type="PaxDb" id="3702-AT2G34840.1"/>
<dbReference type="ProteomicsDB" id="241168">
    <molecule id="O64748-1"/>
</dbReference>
<dbReference type="DNASU" id="818049"/>
<dbReference type="EnsemblPlants" id="AT2G34840.1">
    <molecule id="O64748-1"/>
    <property type="protein sequence ID" value="AT2G34840.1"/>
    <property type="gene ID" value="AT2G34840"/>
</dbReference>
<dbReference type="GeneID" id="818049"/>
<dbReference type="Gramene" id="AT2G34840.1">
    <molecule id="O64748-1"/>
    <property type="protein sequence ID" value="AT2G34840.1"/>
    <property type="gene ID" value="AT2G34840"/>
</dbReference>
<dbReference type="KEGG" id="ath:AT2G34840"/>
<dbReference type="Araport" id="AT2G34840"/>
<dbReference type="TAIR" id="AT2G34840"/>
<dbReference type="eggNOG" id="KOG3081">
    <property type="taxonomic scope" value="Eukaryota"/>
</dbReference>
<dbReference type="HOGENOM" id="CLU_049363_0_0_1"/>
<dbReference type="InParanoid" id="O64748"/>
<dbReference type="OMA" id="SWVGMRE"/>
<dbReference type="PhylomeDB" id="O64748"/>
<dbReference type="PRO" id="PR:O64748"/>
<dbReference type="Proteomes" id="UP000006548">
    <property type="component" value="Chromosome 2"/>
</dbReference>
<dbReference type="ExpressionAtlas" id="O64748">
    <property type="expression patterns" value="baseline and differential"/>
</dbReference>
<dbReference type="GO" id="GO:0030663">
    <property type="term" value="C:COPI-coated vesicle membrane"/>
    <property type="evidence" value="ECO:0007669"/>
    <property type="project" value="UniProtKB-SubCell"/>
</dbReference>
<dbReference type="GO" id="GO:0000139">
    <property type="term" value="C:Golgi membrane"/>
    <property type="evidence" value="ECO:0007669"/>
    <property type="project" value="UniProtKB-SubCell"/>
</dbReference>
<dbReference type="GO" id="GO:0005198">
    <property type="term" value="F:structural molecule activity"/>
    <property type="evidence" value="ECO:0007669"/>
    <property type="project" value="InterPro"/>
</dbReference>
<dbReference type="GO" id="GO:0015031">
    <property type="term" value="P:protein transport"/>
    <property type="evidence" value="ECO:0007669"/>
    <property type="project" value="UniProtKB-KW"/>
</dbReference>
<dbReference type="GO" id="GO:0006890">
    <property type="term" value="P:retrograde vesicle-mediated transport, Golgi to endoplasmic reticulum"/>
    <property type="evidence" value="ECO:0007669"/>
    <property type="project" value="InterPro"/>
</dbReference>
<dbReference type="FunFam" id="1.25.40.10:FF:000140">
    <property type="entry name" value="Coatomer subunit epsilon"/>
    <property type="match status" value="1"/>
</dbReference>
<dbReference type="Gene3D" id="1.25.40.10">
    <property type="entry name" value="Tetratricopeptide repeat domain"/>
    <property type="match status" value="1"/>
</dbReference>
<dbReference type="InterPro" id="IPR006822">
    <property type="entry name" value="Coatomer_esu"/>
</dbReference>
<dbReference type="InterPro" id="IPR011990">
    <property type="entry name" value="TPR-like_helical_dom_sf"/>
</dbReference>
<dbReference type="PANTHER" id="PTHR10805">
    <property type="entry name" value="COATOMER SUBUNIT EPSILON"/>
    <property type="match status" value="1"/>
</dbReference>
<dbReference type="PANTHER" id="PTHR10805:SF0">
    <property type="entry name" value="COATOMER SUBUNIT EPSILON"/>
    <property type="match status" value="1"/>
</dbReference>
<dbReference type="Pfam" id="PF04733">
    <property type="entry name" value="Coatomer_E"/>
    <property type="match status" value="1"/>
</dbReference>
<dbReference type="PIRSF" id="PIRSF016478">
    <property type="entry name" value="Coatomer_esu"/>
    <property type="match status" value="1"/>
</dbReference>
<dbReference type="SUPFAM" id="SSF48452">
    <property type="entry name" value="TPR-like"/>
    <property type="match status" value="1"/>
</dbReference>
<sequence length="293" mass="32658">MSAMGAGPDHLFNLRNNFYLGAYQTAINNSEIANLSPENAVERDCLVFRSYIALGSYQLVISEIDESAATPLQAVKLLAMYLSTPQNKESTISSLKEWLADSTIGNNDTLRLIAGIIFMHEEDYNETLKHTHAGGTMDLYALNVQIFIKMHRAEYAEKQLRVMQQIDEDHTLTQLASAWLNLAVGGSKIQEAYLIFEDFSEKYPMTCLILNGKAVCCMQMGNFDEAETLLLEALNKDAKDPETLANLVVCSLHVGKSSSRHLSQLKLSHPEHILVKRVSSAEDNFERAVQLVA</sequence>
<comment type="function">
    <text evidence="1">The coatomer is a cytosolic protein complex that binds to dilysine motifs and reversibly associates with Golgi non-clathrin-coated vesicles, which further mediate biosynthetic protein transport from the ER, via the Golgi up to the trans Golgi network. The coatomer complex is required for budding from Golgi membranes, and is essential for the retrograde Golgi-to-ER transport of dilysine-tagged proteins (By similarity).</text>
</comment>
<comment type="subunit">
    <text evidence="1">Oligomeric complex that consists of at least the alpha, beta, beta', gamma, delta, epsilon and zeta subunits.</text>
</comment>
<comment type="subcellular location">
    <subcellularLocation>
        <location evidence="1">Cytoplasm</location>
    </subcellularLocation>
    <subcellularLocation>
        <location evidence="1">Golgi apparatus membrane</location>
        <topology evidence="1">Peripheral membrane protein</topology>
        <orientation evidence="1">Cytoplasmic side</orientation>
    </subcellularLocation>
    <subcellularLocation>
        <location evidence="1">Cytoplasmic vesicle</location>
        <location evidence="1">COPI-coated vesicle membrane</location>
        <topology evidence="1">Peripheral membrane protein</topology>
        <orientation evidence="1">Cytoplasmic side</orientation>
    </subcellularLocation>
    <text evidence="1">The coatomer is cytoplasmic or polymerized on the cytoplasmic side of the Golgi, as well as on the vesicles/buds originating from it.</text>
</comment>
<comment type="alternative products">
    <event type="alternative splicing"/>
    <isoform>
        <id>O64748-1</id>
        <name>1</name>
        <sequence type="displayed"/>
    </isoform>
    <text>A number of isoforms are produced. According to EST sequences.</text>
</comment>
<comment type="similarity">
    <text evidence="2">Belongs to the COPE family.</text>
</comment>
<evidence type="ECO:0000250" key="1"/>
<evidence type="ECO:0000305" key="2"/>
<reference key="1">
    <citation type="journal article" date="1999" name="Nature">
        <title>Sequence and analysis of chromosome 2 of the plant Arabidopsis thaliana.</title>
        <authorList>
            <person name="Lin X."/>
            <person name="Kaul S."/>
            <person name="Rounsley S.D."/>
            <person name="Shea T.P."/>
            <person name="Benito M.-I."/>
            <person name="Town C.D."/>
            <person name="Fujii C.Y."/>
            <person name="Mason T.M."/>
            <person name="Bowman C.L."/>
            <person name="Barnstead M.E."/>
            <person name="Feldblyum T.V."/>
            <person name="Buell C.R."/>
            <person name="Ketchum K.A."/>
            <person name="Lee J.J."/>
            <person name="Ronning C.M."/>
            <person name="Koo H.L."/>
            <person name="Moffat K.S."/>
            <person name="Cronin L.A."/>
            <person name="Shen M."/>
            <person name="Pai G."/>
            <person name="Van Aken S."/>
            <person name="Umayam L."/>
            <person name="Tallon L.J."/>
            <person name="Gill J.E."/>
            <person name="Adams M.D."/>
            <person name="Carrera A.J."/>
            <person name="Creasy T.H."/>
            <person name="Goodman H.M."/>
            <person name="Somerville C.R."/>
            <person name="Copenhaver G.P."/>
            <person name="Preuss D."/>
            <person name="Nierman W.C."/>
            <person name="White O."/>
            <person name="Eisen J.A."/>
            <person name="Salzberg S.L."/>
            <person name="Fraser C.M."/>
            <person name="Venter J.C."/>
        </authorList>
    </citation>
    <scope>NUCLEOTIDE SEQUENCE [LARGE SCALE GENOMIC DNA]</scope>
    <source>
        <strain>cv. Columbia</strain>
    </source>
</reference>
<reference key="2">
    <citation type="journal article" date="2017" name="Plant J.">
        <title>Araport11: a complete reannotation of the Arabidopsis thaliana reference genome.</title>
        <authorList>
            <person name="Cheng C.Y."/>
            <person name="Krishnakumar V."/>
            <person name="Chan A.P."/>
            <person name="Thibaud-Nissen F."/>
            <person name="Schobel S."/>
            <person name="Town C.D."/>
        </authorList>
    </citation>
    <scope>GENOME REANNOTATION</scope>
    <source>
        <strain>cv. Columbia</strain>
    </source>
</reference>
<reference key="3">
    <citation type="journal article" date="2003" name="Science">
        <title>Empirical analysis of transcriptional activity in the Arabidopsis genome.</title>
        <authorList>
            <person name="Yamada K."/>
            <person name="Lim J."/>
            <person name="Dale J.M."/>
            <person name="Chen H."/>
            <person name="Shinn P."/>
            <person name="Palm C.J."/>
            <person name="Southwick A.M."/>
            <person name="Wu H.C."/>
            <person name="Kim C.J."/>
            <person name="Nguyen M."/>
            <person name="Pham P.K."/>
            <person name="Cheuk R.F."/>
            <person name="Karlin-Newmann G."/>
            <person name="Liu S.X."/>
            <person name="Lam B."/>
            <person name="Sakano H."/>
            <person name="Wu T."/>
            <person name="Yu G."/>
            <person name="Miranda M."/>
            <person name="Quach H.L."/>
            <person name="Tripp M."/>
            <person name="Chang C.H."/>
            <person name="Lee J.M."/>
            <person name="Toriumi M.J."/>
            <person name="Chan M.M."/>
            <person name="Tang C.C."/>
            <person name="Onodera C.S."/>
            <person name="Deng J.M."/>
            <person name="Akiyama K."/>
            <person name="Ansari Y."/>
            <person name="Arakawa T."/>
            <person name="Banh J."/>
            <person name="Banno F."/>
            <person name="Bowser L."/>
            <person name="Brooks S.Y."/>
            <person name="Carninci P."/>
            <person name="Chao Q."/>
            <person name="Choy N."/>
            <person name="Enju A."/>
            <person name="Goldsmith A.D."/>
            <person name="Gurjal M."/>
            <person name="Hansen N.F."/>
            <person name="Hayashizaki Y."/>
            <person name="Johnson-Hopson C."/>
            <person name="Hsuan V.W."/>
            <person name="Iida K."/>
            <person name="Karnes M."/>
            <person name="Khan S."/>
            <person name="Koesema E."/>
            <person name="Ishida J."/>
            <person name="Jiang P.X."/>
            <person name="Jones T."/>
            <person name="Kawai J."/>
            <person name="Kamiya A."/>
            <person name="Meyers C."/>
            <person name="Nakajima M."/>
            <person name="Narusaka M."/>
            <person name="Seki M."/>
            <person name="Sakurai T."/>
            <person name="Satou M."/>
            <person name="Tamse R."/>
            <person name="Vaysberg M."/>
            <person name="Wallender E.K."/>
            <person name="Wong C."/>
            <person name="Yamamura Y."/>
            <person name="Yuan S."/>
            <person name="Shinozaki K."/>
            <person name="Davis R.W."/>
            <person name="Theologis A."/>
            <person name="Ecker J.R."/>
        </authorList>
    </citation>
    <scope>NUCLEOTIDE SEQUENCE [LARGE SCALE MRNA]</scope>
    <source>
        <strain>cv. Columbia</strain>
    </source>
</reference>
<organism>
    <name type="scientific">Arabidopsis thaliana</name>
    <name type="common">Mouse-ear cress</name>
    <dbReference type="NCBI Taxonomy" id="3702"/>
    <lineage>
        <taxon>Eukaryota</taxon>
        <taxon>Viridiplantae</taxon>
        <taxon>Streptophyta</taxon>
        <taxon>Embryophyta</taxon>
        <taxon>Tracheophyta</taxon>
        <taxon>Spermatophyta</taxon>
        <taxon>Magnoliopsida</taxon>
        <taxon>eudicotyledons</taxon>
        <taxon>Gunneridae</taxon>
        <taxon>Pentapetalae</taxon>
        <taxon>rosids</taxon>
        <taxon>malvids</taxon>
        <taxon>Brassicales</taxon>
        <taxon>Brassicaceae</taxon>
        <taxon>Camelineae</taxon>
        <taxon>Arabidopsis</taxon>
    </lineage>
</organism>
<proteinExistence type="evidence at transcript level"/>